<accession>P9WHH3</accession>
<accession>L0TB27</accession>
<accession>O07927</accession>
<accession>Q6MX25</accession>
<accession>Q7D6G4</accession>
<comment type="function">
    <text evidence="2">Catalyzes the NAD(P)H-dependent reduction of mycothione (the oxidized disulfide form of mycothiol) to mycothiol.</text>
</comment>
<comment type="catalytic activity">
    <reaction evidence="2">
        <text>2 mycothiol + NADP(+) = mycothione + NADPH + H(+)</text>
        <dbReference type="Rhea" id="RHEA:12685"/>
        <dbReference type="ChEBI" id="CHEBI:15378"/>
        <dbReference type="ChEBI" id="CHEBI:16086"/>
        <dbReference type="ChEBI" id="CHEBI:16768"/>
        <dbReference type="ChEBI" id="CHEBI:57783"/>
        <dbReference type="ChEBI" id="CHEBI:58349"/>
        <dbReference type="EC" id="1.8.1.15"/>
    </reaction>
</comment>
<comment type="catalytic activity">
    <reaction evidence="2">
        <text>2 mycothiol + NAD(+) = mycothione + NADH + H(+)</text>
        <dbReference type="Rhea" id="RHEA:12689"/>
        <dbReference type="ChEBI" id="CHEBI:15378"/>
        <dbReference type="ChEBI" id="CHEBI:16086"/>
        <dbReference type="ChEBI" id="CHEBI:16768"/>
        <dbReference type="ChEBI" id="CHEBI:57540"/>
        <dbReference type="ChEBI" id="CHEBI:57945"/>
        <dbReference type="EC" id="1.8.1.15"/>
    </reaction>
</comment>
<comment type="cofactor">
    <cofactor evidence="2">
        <name>FAD</name>
        <dbReference type="ChEBI" id="CHEBI:57692"/>
    </cofactor>
    <text evidence="2">Binds 1 FAD per subunit.</text>
</comment>
<comment type="biophysicochemical properties">
    <kinetics>
        <KM evidence="2 3">7.7 uM for NADPH</KM>
        <KM evidence="2 3">43 uM for NADH</KM>
        <KM evidence="2 3">70 uM for mycothione</KM>
    </kinetics>
    <phDependence>
        <text evidence="2 3">Optimum pH is 7-9.</text>
    </phDependence>
</comment>
<comment type="subunit">
    <text evidence="2">Homodimer.</text>
</comment>
<comment type="similarity">
    <text evidence="4">Belongs to the class-I pyridine nucleotide-disulfide oxidoreductase family.</text>
</comment>
<gene>
    <name type="primary">mtr</name>
    <name type="synonym">gorA</name>
    <name type="ordered locus">Rv2855</name>
</gene>
<keyword id="KW-0903">Direct protein sequencing</keyword>
<keyword id="KW-1015">Disulfide bond</keyword>
<keyword id="KW-0274">FAD</keyword>
<keyword id="KW-0285">Flavoprotein</keyword>
<keyword id="KW-0520">NAD</keyword>
<keyword id="KW-0521">NADP</keyword>
<keyword id="KW-0560">Oxidoreductase</keyword>
<keyword id="KW-0676">Redox-active center</keyword>
<keyword id="KW-1185">Reference proteome</keyword>
<protein>
    <recommendedName>
        <fullName>Mycothione reductase</fullName>
        <ecNumber>1.8.1.15</ecNumber>
    </recommendedName>
    <alternativeName>
        <fullName>Mycothiol-disulfide reductase</fullName>
    </alternativeName>
    <alternativeName>
        <fullName>NADPH-dependent mycothione reductase</fullName>
    </alternativeName>
</protein>
<sequence length="459" mass="49946">METYDIAIIGTGSGNSILDERYASKRAAICEQGTFGGTCLNVGCIPTKMFVYAAEVAKTIRGASRYGIDAHIDRVRWDDVVSRVFGRIDPIALSGEDYRRCAPNIDVYRTHTRFGPVQADGRYLLRTDAGEEFTAEQVVIAAGSRPVIPPAILASGVDYHTSDTVMRIAELPEHIVIVGSGFIAAEFAHVFSALGVRVTLVIRGSCLLRHCDDTICERFTRIASTKWELRTHRNVVDGQQRGSGVALRLDDGCTINADLLLVATGRVSNADLLDAEQAGVDVEDGRVIVDEYQRTSARGVFALGDVSSPYLLKHVANHEARVVQHNLLCDWEDTQSMIVTDHRYVPAAVFTDPQIAAVGLTENQAVAKGLDISVKIQDYGDVAYGWAMEDTSGIVKLITERGSGRLLGAHIMGYQASSLIQPLIQAMSFGLTAAEMARGQYWIHPALPEVVENALLGLR</sequence>
<name>MTR_MYCTU</name>
<organism>
    <name type="scientific">Mycobacterium tuberculosis (strain ATCC 25618 / H37Rv)</name>
    <dbReference type="NCBI Taxonomy" id="83332"/>
    <lineage>
        <taxon>Bacteria</taxon>
        <taxon>Bacillati</taxon>
        <taxon>Actinomycetota</taxon>
        <taxon>Actinomycetes</taxon>
        <taxon>Mycobacteriales</taxon>
        <taxon>Mycobacteriaceae</taxon>
        <taxon>Mycobacterium</taxon>
        <taxon>Mycobacterium tuberculosis complex</taxon>
    </lineage>
</organism>
<proteinExistence type="evidence at protein level"/>
<reference key="1">
    <citation type="journal article" date="1998" name="Nature">
        <title>Deciphering the biology of Mycobacterium tuberculosis from the complete genome sequence.</title>
        <authorList>
            <person name="Cole S.T."/>
            <person name="Brosch R."/>
            <person name="Parkhill J."/>
            <person name="Garnier T."/>
            <person name="Churcher C.M."/>
            <person name="Harris D.E."/>
            <person name="Gordon S.V."/>
            <person name="Eiglmeier K."/>
            <person name="Gas S."/>
            <person name="Barry C.E. III"/>
            <person name="Tekaia F."/>
            <person name="Badcock K."/>
            <person name="Basham D."/>
            <person name="Brown D."/>
            <person name="Chillingworth T."/>
            <person name="Connor R."/>
            <person name="Davies R.M."/>
            <person name="Devlin K."/>
            <person name="Feltwell T."/>
            <person name="Gentles S."/>
            <person name="Hamlin N."/>
            <person name="Holroyd S."/>
            <person name="Hornsby T."/>
            <person name="Jagels K."/>
            <person name="Krogh A."/>
            <person name="McLean J."/>
            <person name="Moule S."/>
            <person name="Murphy L.D."/>
            <person name="Oliver S."/>
            <person name="Osborne J."/>
            <person name="Quail M.A."/>
            <person name="Rajandream M.A."/>
            <person name="Rogers J."/>
            <person name="Rutter S."/>
            <person name="Seeger K."/>
            <person name="Skelton S."/>
            <person name="Squares S."/>
            <person name="Squares R."/>
            <person name="Sulston J.E."/>
            <person name="Taylor K."/>
            <person name="Whitehead S."/>
            <person name="Barrell B.G."/>
        </authorList>
    </citation>
    <scope>NUCLEOTIDE SEQUENCE [LARGE SCALE GENOMIC DNA]</scope>
    <source>
        <strain>ATCC 25618 / H37Rv</strain>
    </source>
</reference>
<reference key="2">
    <citation type="journal article" date="1999" name="Biochemistry">
        <title>Expression, purification, and characterization of Mycobacterium tuberculosis mycothione reductase.</title>
        <authorList>
            <person name="Patel M.P."/>
            <person name="Blanchard J.S."/>
        </authorList>
    </citation>
    <scope>PROTEIN SEQUENCE OF 1-11</scope>
    <scope>FUNCTION</scope>
    <scope>CATALYTIC ACTIVITY</scope>
    <scope>COFACTOR</scope>
    <scope>BIOPHYSICOCHEMICAL PROPERTIES</scope>
    <scope>SUBUNIT</scope>
    <scope>REACTION MECHANISM</scope>
</reference>
<reference key="3">
    <citation type="journal article" date="2001" name="Biochemistry">
        <title>Mycobacterium tuberculosis mycothione reductase: pH dependence of the kinetic parameters and kinetic isotope effects.</title>
        <authorList>
            <person name="Patel M.P."/>
            <person name="Blanchard J.S."/>
        </authorList>
    </citation>
    <scope>BIOPHYSICOCHEMICAL PROPERTIES</scope>
    <scope>ENZYME KINETICS</scope>
    <scope>REACTION MECHANISM</scope>
</reference>
<reference key="4">
    <citation type="journal article" date="2011" name="Mol. Cell. Proteomics">
        <title>Proteogenomic analysis of Mycobacterium tuberculosis by high resolution mass spectrometry.</title>
        <authorList>
            <person name="Kelkar D.S."/>
            <person name="Kumar D."/>
            <person name="Kumar P."/>
            <person name="Balakrishnan L."/>
            <person name="Muthusamy B."/>
            <person name="Yadav A.K."/>
            <person name="Shrivastava P."/>
            <person name="Marimuthu A."/>
            <person name="Anand S."/>
            <person name="Sundaram H."/>
            <person name="Kingsbury R."/>
            <person name="Harsha H.C."/>
            <person name="Nair B."/>
            <person name="Prasad T.S."/>
            <person name="Chauhan D.S."/>
            <person name="Katoch K."/>
            <person name="Katoch V.M."/>
            <person name="Kumar P."/>
            <person name="Chaerkady R."/>
            <person name="Ramachandran S."/>
            <person name="Dash D."/>
            <person name="Pandey A."/>
        </authorList>
    </citation>
    <scope>IDENTIFICATION BY MASS SPECTROMETRY [LARGE SCALE ANALYSIS]</scope>
    <source>
        <strain>ATCC 25618 / H37Rv</strain>
    </source>
</reference>
<feature type="chain" id="PRO_0000399830" description="Mycothione reductase">
    <location>
        <begin position="1"/>
        <end position="459"/>
    </location>
</feature>
<feature type="active site" description="Proton acceptor">
    <location>
        <position position="444"/>
    </location>
</feature>
<feature type="binding site" evidence="1">
    <location>
        <begin position="31"/>
        <end position="39"/>
    </location>
    <ligand>
        <name>FAD</name>
        <dbReference type="ChEBI" id="CHEBI:57692"/>
    </ligand>
</feature>
<feature type="disulfide bond" description="Redox-active">
    <location>
        <begin position="39"/>
        <end position="44"/>
    </location>
</feature>
<dbReference type="EC" id="1.8.1.15"/>
<dbReference type="EMBL" id="AF002193">
    <property type="protein sequence ID" value="AAB63369.1"/>
    <property type="molecule type" value="Genomic_DNA"/>
</dbReference>
<dbReference type="EMBL" id="AL123456">
    <property type="protein sequence ID" value="CCP45656.1"/>
    <property type="molecule type" value="Genomic_DNA"/>
</dbReference>
<dbReference type="PIR" id="B70590">
    <property type="entry name" value="B70590"/>
</dbReference>
<dbReference type="RefSeq" id="WP_003414557.1">
    <property type="nucleotide sequence ID" value="NZ_NVQJ01000006.1"/>
</dbReference>
<dbReference type="RefSeq" id="YP_177910.1">
    <property type="nucleotide sequence ID" value="NC_000962.3"/>
</dbReference>
<dbReference type="SMR" id="P9WHH3"/>
<dbReference type="FunCoup" id="P9WHH3">
    <property type="interactions" value="56"/>
</dbReference>
<dbReference type="STRING" id="83332.Rv2855"/>
<dbReference type="ChEMBL" id="CHEMBL1075170"/>
<dbReference type="PaxDb" id="83332-Rv2855"/>
<dbReference type="DNASU" id="887773"/>
<dbReference type="GeneID" id="887773"/>
<dbReference type="KEGG" id="mtu:Rv2855"/>
<dbReference type="KEGG" id="mtv:RVBD_2855"/>
<dbReference type="TubercuList" id="Rv2855"/>
<dbReference type="eggNOG" id="COG1249">
    <property type="taxonomic scope" value="Bacteria"/>
</dbReference>
<dbReference type="InParanoid" id="P9WHH3"/>
<dbReference type="OrthoDB" id="9800167at2"/>
<dbReference type="PhylomeDB" id="P9WHH3"/>
<dbReference type="BioCyc" id="MetaCyc:G185E-7106-MONOMER"/>
<dbReference type="BRENDA" id="1.8.1.15">
    <property type="organism ID" value="3445"/>
</dbReference>
<dbReference type="Reactome" id="R-MTU-870331">
    <property type="pathway name" value="Mycothiol metabolism"/>
</dbReference>
<dbReference type="SABIO-RK" id="P9WHH3"/>
<dbReference type="PRO" id="PR:P9WHH3"/>
<dbReference type="Proteomes" id="UP000001584">
    <property type="component" value="Chromosome"/>
</dbReference>
<dbReference type="GO" id="GO:0005829">
    <property type="term" value="C:cytosol"/>
    <property type="evidence" value="ECO:0000304"/>
    <property type="project" value="Reactome"/>
</dbReference>
<dbReference type="GO" id="GO:0004148">
    <property type="term" value="F:dihydrolipoyl dehydrogenase (NADH) activity"/>
    <property type="evidence" value="ECO:0000318"/>
    <property type="project" value="GO_Central"/>
</dbReference>
<dbReference type="GO" id="GO:0050660">
    <property type="term" value="F:flavin adenine dinucleotide binding"/>
    <property type="evidence" value="ECO:0000314"/>
    <property type="project" value="MTBBASE"/>
</dbReference>
<dbReference type="GO" id="GO:0050627">
    <property type="term" value="F:mycothione reductase [NAD(P)H] activity"/>
    <property type="evidence" value="ECO:0000314"/>
    <property type="project" value="MTBBASE"/>
</dbReference>
<dbReference type="GO" id="GO:0070402">
    <property type="term" value="F:NADPH binding"/>
    <property type="evidence" value="ECO:0000314"/>
    <property type="project" value="MTBBASE"/>
</dbReference>
<dbReference type="GO" id="GO:0006103">
    <property type="term" value="P:2-oxoglutarate metabolic process"/>
    <property type="evidence" value="ECO:0000318"/>
    <property type="project" value="GO_Central"/>
</dbReference>
<dbReference type="GO" id="GO:0010126">
    <property type="term" value="P:mycothiol metabolic process"/>
    <property type="evidence" value="ECO:0000304"/>
    <property type="project" value="Reactome"/>
</dbReference>
<dbReference type="GO" id="GO:0006090">
    <property type="term" value="P:pyruvate metabolic process"/>
    <property type="evidence" value="ECO:0000318"/>
    <property type="project" value="GO_Central"/>
</dbReference>
<dbReference type="FunFam" id="3.30.390.30:FF:000017">
    <property type="entry name" value="Mycothione reductase"/>
    <property type="match status" value="1"/>
</dbReference>
<dbReference type="FunFam" id="3.50.50.60:FF:000352">
    <property type="entry name" value="Mycothione reductase"/>
    <property type="match status" value="1"/>
</dbReference>
<dbReference type="Gene3D" id="3.30.390.30">
    <property type="match status" value="1"/>
</dbReference>
<dbReference type="Gene3D" id="3.50.50.60">
    <property type="entry name" value="FAD/NAD(P)-binding domain"/>
    <property type="match status" value="2"/>
</dbReference>
<dbReference type="InterPro" id="IPR050151">
    <property type="entry name" value="Class-I_Pyr_Nuc-Dis_Oxidored"/>
</dbReference>
<dbReference type="InterPro" id="IPR036188">
    <property type="entry name" value="FAD/NAD-bd_sf"/>
</dbReference>
<dbReference type="InterPro" id="IPR023753">
    <property type="entry name" value="FAD/NAD-binding_dom"/>
</dbReference>
<dbReference type="InterPro" id="IPR016156">
    <property type="entry name" value="FAD/NAD-linked_Rdtase_dimer_sf"/>
</dbReference>
<dbReference type="InterPro" id="IPR017817">
    <property type="entry name" value="Mycothione_reductase"/>
</dbReference>
<dbReference type="InterPro" id="IPR001100">
    <property type="entry name" value="Pyr_nuc-diS_OxRdtase"/>
</dbReference>
<dbReference type="InterPro" id="IPR004099">
    <property type="entry name" value="Pyr_nucl-diS_OxRdtase_dimer"/>
</dbReference>
<dbReference type="InterPro" id="IPR012999">
    <property type="entry name" value="Pyr_OxRdtase_I_AS"/>
</dbReference>
<dbReference type="NCBIfam" id="TIGR03452">
    <property type="entry name" value="mycothione_red"/>
    <property type="match status" value="1"/>
</dbReference>
<dbReference type="NCBIfam" id="NF005884">
    <property type="entry name" value="PRK07846.1"/>
    <property type="match status" value="1"/>
</dbReference>
<dbReference type="PANTHER" id="PTHR22912:SF217">
    <property type="entry name" value="DIHYDROLIPOYL DEHYDROGENASE"/>
    <property type="match status" value="1"/>
</dbReference>
<dbReference type="PANTHER" id="PTHR22912">
    <property type="entry name" value="DISULFIDE OXIDOREDUCTASE"/>
    <property type="match status" value="1"/>
</dbReference>
<dbReference type="Pfam" id="PF07992">
    <property type="entry name" value="Pyr_redox_2"/>
    <property type="match status" value="1"/>
</dbReference>
<dbReference type="Pfam" id="PF02852">
    <property type="entry name" value="Pyr_redox_dim"/>
    <property type="match status" value="1"/>
</dbReference>
<dbReference type="PIRSF" id="PIRSF000350">
    <property type="entry name" value="Mercury_reductase_MerA"/>
    <property type="match status" value="1"/>
</dbReference>
<dbReference type="PRINTS" id="PR00368">
    <property type="entry name" value="FADPNR"/>
</dbReference>
<dbReference type="PRINTS" id="PR00411">
    <property type="entry name" value="PNDRDTASEI"/>
</dbReference>
<dbReference type="SUPFAM" id="SSF51905">
    <property type="entry name" value="FAD/NAD(P)-binding domain"/>
    <property type="match status" value="1"/>
</dbReference>
<dbReference type="SUPFAM" id="SSF55424">
    <property type="entry name" value="FAD/NAD-linked reductases, dimerisation (C-terminal) domain"/>
    <property type="match status" value="1"/>
</dbReference>
<dbReference type="PROSITE" id="PS00076">
    <property type="entry name" value="PYRIDINE_REDOX_1"/>
    <property type="match status" value="1"/>
</dbReference>
<evidence type="ECO:0000250" key="1"/>
<evidence type="ECO:0000269" key="2">
    <source>
    </source>
</evidence>
<evidence type="ECO:0000269" key="3">
    <source>
    </source>
</evidence>
<evidence type="ECO:0000305" key="4"/>